<protein>
    <recommendedName>
        <fullName evidence="2">Photosystem I iron-sulfur center</fullName>
        <ecNumber evidence="2">1.97.1.12</ecNumber>
    </recommendedName>
    <alternativeName>
        <fullName evidence="2">9 kDa polypeptide</fullName>
    </alternativeName>
    <alternativeName>
        <fullName evidence="2">PSI-C</fullName>
    </alternativeName>
    <alternativeName>
        <fullName evidence="2">Photosystem I subunit VII</fullName>
    </alternativeName>
    <alternativeName>
        <fullName evidence="2">PsaC</fullName>
    </alternativeName>
</protein>
<proteinExistence type="inferred from homology"/>
<accession>Q3B0I2</accession>
<gene>
    <name evidence="2" type="primary">psaC</name>
    <name type="ordered locus">Syncc9902_0171</name>
</gene>
<comment type="function">
    <text evidence="2">Apoprotein for the two 4Fe-4S centers FA and FB of photosystem I (PSI); essential for photochemical activity. FB is the terminal electron acceptor of PSI, donating electrons to ferredoxin. The C-terminus interacts with PsaA/B/D and helps assemble the protein into the PSI complex. Required for binding of PsaD and PsaE to PSI. PSI is a plastocyanin/cytochrome c6-ferredoxin oxidoreductase, converting photonic excitation into a charge separation, which transfers an electron from the donor P700 chlorophyll pair to the spectroscopically characterized acceptors A0, A1, FX, FA and FB in turn.</text>
</comment>
<comment type="catalytic activity">
    <reaction evidence="2">
        <text>reduced [plastocyanin] + hnu + oxidized [2Fe-2S]-[ferredoxin] = oxidized [plastocyanin] + reduced [2Fe-2S]-[ferredoxin]</text>
        <dbReference type="Rhea" id="RHEA:30407"/>
        <dbReference type="Rhea" id="RHEA-COMP:10000"/>
        <dbReference type="Rhea" id="RHEA-COMP:10001"/>
        <dbReference type="Rhea" id="RHEA-COMP:10039"/>
        <dbReference type="Rhea" id="RHEA-COMP:10040"/>
        <dbReference type="ChEBI" id="CHEBI:29036"/>
        <dbReference type="ChEBI" id="CHEBI:30212"/>
        <dbReference type="ChEBI" id="CHEBI:33737"/>
        <dbReference type="ChEBI" id="CHEBI:33738"/>
        <dbReference type="ChEBI" id="CHEBI:49552"/>
        <dbReference type="EC" id="1.97.1.12"/>
    </reaction>
</comment>
<comment type="cofactor">
    <cofactor evidence="2">
        <name>[4Fe-4S] cluster</name>
        <dbReference type="ChEBI" id="CHEBI:49883"/>
    </cofactor>
    <text evidence="2">Binds 2 [4Fe-4S] clusters. Cluster 2 is most probably the spectroscopically characterized electron acceptor FA and cluster 1 is most probably FB.</text>
</comment>
<comment type="subunit">
    <text evidence="2">The cyanobacterial PSI reaction center is composed of one copy each of PsaA,B,C,D,E,F,I,J,K,L,M and X, and forms trimeric complexes.</text>
</comment>
<comment type="subcellular location">
    <subcellularLocation>
        <location evidence="2">Cellular thylakoid membrane</location>
        <topology evidence="2">Peripheral membrane protein</topology>
        <orientation evidence="2">Cytoplasmic side</orientation>
    </subcellularLocation>
</comment>
<comment type="sequence caution" evidence="3">
    <conflict type="erroneous initiation">
        <sequence resource="EMBL-CDS" id="ABB25146"/>
    </conflict>
</comment>
<evidence type="ECO:0000250" key="1"/>
<evidence type="ECO:0000255" key="2">
    <source>
        <dbReference type="HAMAP-Rule" id="MF_01303"/>
    </source>
</evidence>
<evidence type="ECO:0000305" key="3"/>
<feature type="initiator methionine" description="Removed" evidence="1">
    <location>
        <position position="1"/>
    </location>
</feature>
<feature type="chain" id="PRO_0000292133" description="Photosystem I iron-sulfur center">
    <location>
        <begin position="2"/>
        <end position="81"/>
    </location>
</feature>
<feature type="domain" description="4Fe-4S ferredoxin-type 1" evidence="2">
    <location>
        <begin position="2"/>
        <end position="31"/>
    </location>
</feature>
<feature type="domain" description="4Fe-4S ferredoxin-type 2" evidence="2">
    <location>
        <begin position="37"/>
        <end position="68"/>
    </location>
</feature>
<feature type="binding site" evidence="2">
    <location>
        <position position="11"/>
    </location>
    <ligand>
        <name>[4Fe-4S] cluster</name>
        <dbReference type="ChEBI" id="CHEBI:49883"/>
        <label>1</label>
    </ligand>
</feature>
<feature type="binding site" evidence="2">
    <location>
        <position position="14"/>
    </location>
    <ligand>
        <name>[4Fe-4S] cluster</name>
        <dbReference type="ChEBI" id="CHEBI:49883"/>
        <label>1</label>
    </ligand>
</feature>
<feature type="binding site" evidence="2">
    <location>
        <position position="17"/>
    </location>
    <ligand>
        <name>[4Fe-4S] cluster</name>
        <dbReference type="ChEBI" id="CHEBI:49883"/>
        <label>1</label>
    </ligand>
</feature>
<feature type="binding site" evidence="2">
    <location>
        <position position="21"/>
    </location>
    <ligand>
        <name>[4Fe-4S] cluster</name>
        <dbReference type="ChEBI" id="CHEBI:49883"/>
        <label>2</label>
    </ligand>
</feature>
<feature type="binding site" evidence="2">
    <location>
        <position position="48"/>
    </location>
    <ligand>
        <name>[4Fe-4S] cluster</name>
        <dbReference type="ChEBI" id="CHEBI:49883"/>
        <label>2</label>
    </ligand>
</feature>
<feature type="binding site" evidence="2">
    <location>
        <position position="51"/>
    </location>
    <ligand>
        <name>[4Fe-4S] cluster</name>
        <dbReference type="ChEBI" id="CHEBI:49883"/>
        <label>2</label>
    </ligand>
</feature>
<feature type="binding site" evidence="2">
    <location>
        <position position="54"/>
    </location>
    <ligand>
        <name>[4Fe-4S] cluster</name>
        <dbReference type="ChEBI" id="CHEBI:49883"/>
        <label>2</label>
    </ligand>
</feature>
<feature type="binding site" evidence="2">
    <location>
        <position position="58"/>
    </location>
    <ligand>
        <name>[4Fe-4S] cluster</name>
        <dbReference type="ChEBI" id="CHEBI:49883"/>
        <label>1</label>
    </ligand>
</feature>
<name>PSAC_SYNS9</name>
<keyword id="KW-0004">4Fe-4S</keyword>
<keyword id="KW-0249">Electron transport</keyword>
<keyword id="KW-0408">Iron</keyword>
<keyword id="KW-0411">Iron-sulfur</keyword>
<keyword id="KW-0472">Membrane</keyword>
<keyword id="KW-0479">Metal-binding</keyword>
<keyword id="KW-0560">Oxidoreductase</keyword>
<keyword id="KW-0602">Photosynthesis</keyword>
<keyword id="KW-0603">Photosystem I</keyword>
<keyword id="KW-1185">Reference proteome</keyword>
<keyword id="KW-0677">Repeat</keyword>
<keyword id="KW-0793">Thylakoid</keyword>
<keyword id="KW-0813">Transport</keyword>
<dbReference type="EC" id="1.97.1.12" evidence="2"/>
<dbReference type="EMBL" id="CP000097">
    <property type="protein sequence ID" value="ABB25146.1"/>
    <property type="status" value="ALT_INIT"/>
    <property type="molecule type" value="Genomic_DNA"/>
</dbReference>
<dbReference type="RefSeq" id="WP_006850103.1">
    <property type="nucleotide sequence ID" value="NC_007513.1"/>
</dbReference>
<dbReference type="SMR" id="Q3B0I2"/>
<dbReference type="STRING" id="316279.Syncc9902_0171"/>
<dbReference type="KEGG" id="sye:Syncc9902_0171"/>
<dbReference type="eggNOG" id="COG1143">
    <property type="taxonomic scope" value="Bacteria"/>
</dbReference>
<dbReference type="HOGENOM" id="CLU_139698_8_0_3"/>
<dbReference type="OrthoDB" id="9804603at2"/>
<dbReference type="Proteomes" id="UP000002712">
    <property type="component" value="Chromosome"/>
</dbReference>
<dbReference type="GO" id="GO:0009522">
    <property type="term" value="C:photosystem I"/>
    <property type="evidence" value="ECO:0007669"/>
    <property type="project" value="UniProtKB-KW"/>
</dbReference>
<dbReference type="GO" id="GO:0031676">
    <property type="term" value="C:plasma membrane-derived thylakoid membrane"/>
    <property type="evidence" value="ECO:0007669"/>
    <property type="project" value="UniProtKB-SubCell"/>
</dbReference>
<dbReference type="GO" id="GO:0051539">
    <property type="term" value="F:4 iron, 4 sulfur cluster binding"/>
    <property type="evidence" value="ECO:0007669"/>
    <property type="project" value="UniProtKB-KW"/>
</dbReference>
<dbReference type="GO" id="GO:0009055">
    <property type="term" value="F:electron transfer activity"/>
    <property type="evidence" value="ECO:0007669"/>
    <property type="project" value="UniProtKB-UniRule"/>
</dbReference>
<dbReference type="GO" id="GO:0046872">
    <property type="term" value="F:metal ion binding"/>
    <property type="evidence" value="ECO:0007669"/>
    <property type="project" value="UniProtKB-KW"/>
</dbReference>
<dbReference type="GO" id="GO:0016491">
    <property type="term" value="F:oxidoreductase activity"/>
    <property type="evidence" value="ECO:0007669"/>
    <property type="project" value="UniProtKB-KW"/>
</dbReference>
<dbReference type="GO" id="GO:0009773">
    <property type="term" value="P:photosynthetic electron transport in photosystem I"/>
    <property type="evidence" value="ECO:0007669"/>
    <property type="project" value="InterPro"/>
</dbReference>
<dbReference type="FunFam" id="3.30.70.20:FF:000001">
    <property type="entry name" value="Photosystem I iron-sulfur center"/>
    <property type="match status" value="1"/>
</dbReference>
<dbReference type="Gene3D" id="3.30.70.20">
    <property type="match status" value="1"/>
</dbReference>
<dbReference type="HAMAP" id="MF_01303">
    <property type="entry name" value="PSI_PsaC"/>
    <property type="match status" value="1"/>
</dbReference>
<dbReference type="InterPro" id="IPR017896">
    <property type="entry name" value="4Fe4S_Fe-S-bd"/>
</dbReference>
<dbReference type="InterPro" id="IPR017900">
    <property type="entry name" value="4Fe4S_Fe_S_CS"/>
</dbReference>
<dbReference type="InterPro" id="IPR050157">
    <property type="entry name" value="PSI_iron-sulfur_center"/>
</dbReference>
<dbReference type="InterPro" id="IPR017491">
    <property type="entry name" value="PSI_PsaC"/>
</dbReference>
<dbReference type="NCBIfam" id="TIGR03048">
    <property type="entry name" value="PS_I_psaC"/>
    <property type="match status" value="1"/>
</dbReference>
<dbReference type="PANTHER" id="PTHR24960:SF79">
    <property type="entry name" value="PHOTOSYSTEM I IRON-SULFUR CENTER"/>
    <property type="match status" value="1"/>
</dbReference>
<dbReference type="PANTHER" id="PTHR24960">
    <property type="entry name" value="PHOTOSYSTEM I IRON-SULFUR CENTER-RELATED"/>
    <property type="match status" value="1"/>
</dbReference>
<dbReference type="Pfam" id="PF12838">
    <property type="entry name" value="Fer4_7"/>
    <property type="match status" value="1"/>
</dbReference>
<dbReference type="SUPFAM" id="SSF54862">
    <property type="entry name" value="4Fe-4S ferredoxins"/>
    <property type="match status" value="1"/>
</dbReference>
<dbReference type="PROSITE" id="PS00198">
    <property type="entry name" value="4FE4S_FER_1"/>
    <property type="match status" value="2"/>
</dbReference>
<dbReference type="PROSITE" id="PS51379">
    <property type="entry name" value="4FE4S_FER_2"/>
    <property type="match status" value="2"/>
</dbReference>
<sequence length="81" mass="8842">MSHAVKIYDTCIGCTQCVRACPLDVLEMVPWDGCKAGQIASSPRTEDCVGCKRCETACPTDFLSIRVYLGDETTRSMGLAY</sequence>
<reference key="1">
    <citation type="submission" date="2005-08" db="EMBL/GenBank/DDBJ databases">
        <title>Complete sequence of Synechococcus sp. CC9902.</title>
        <authorList>
            <person name="Copeland A."/>
            <person name="Lucas S."/>
            <person name="Lapidus A."/>
            <person name="Barry K."/>
            <person name="Detter J.C."/>
            <person name="Glavina T."/>
            <person name="Hammon N."/>
            <person name="Israni S."/>
            <person name="Pitluck S."/>
            <person name="Martinez M."/>
            <person name="Schmutz J."/>
            <person name="Larimer F."/>
            <person name="Land M."/>
            <person name="Kyrpides N."/>
            <person name="Ivanova N."/>
            <person name="Richardson P."/>
        </authorList>
    </citation>
    <scope>NUCLEOTIDE SEQUENCE [LARGE SCALE GENOMIC DNA]</scope>
    <source>
        <strain>CC9902</strain>
    </source>
</reference>
<organism>
    <name type="scientific">Synechococcus sp. (strain CC9902)</name>
    <dbReference type="NCBI Taxonomy" id="316279"/>
    <lineage>
        <taxon>Bacteria</taxon>
        <taxon>Bacillati</taxon>
        <taxon>Cyanobacteriota</taxon>
        <taxon>Cyanophyceae</taxon>
        <taxon>Synechococcales</taxon>
        <taxon>Synechococcaceae</taxon>
        <taxon>Synechococcus</taxon>
    </lineage>
</organism>